<comment type="function">
    <text evidence="1">E1 component of the 2-oxoglutarate dehydrogenase (OGDH) complex which catalyzes the decarboxylation of 2-oxoglutarate, the first step in the conversion of 2-oxoglutarate to succinyl-CoA and CO(2).</text>
</comment>
<comment type="catalytic activity">
    <reaction evidence="1">
        <text>N(6)-[(R)-lipoyl]-L-lysyl-[protein] + 2-oxoglutarate + H(+) = N(6)-[(R)-S(8)-succinyldihydrolipoyl]-L-lysyl-[protein] + CO2</text>
        <dbReference type="Rhea" id="RHEA:12188"/>
        <dbReference type="Rhea" id="RHEA-COMP:10474"/>
        <dbReference type="Rhea" id="RHEA-COMP:20092"/>
        <dbReference type="ChEBI" id="CHEBI:15378"/>
        <dbReference type="ChEBI" id="CHEBI:16526"/>
        <dbReference type="ChEBI" id="CHEBI:16810"/>
        <dbReference type="ChEBI" id="CHEBI:83099"/>
        <dbReference type="ChEBI" id="CHEBI:83120"/>
        <dbReference type="EC" id="1.2.4.2"/>
    </reaction>
</comment>
<comment type="cofactor">
    <cofactor evidence="1">
        <name>thiamine diphosphate</name>
        <dbReference type="ChEBI" id="CHEBI:58937"/>
    </cofactor>
</comment>
<comment type="subunit">
    <text evidence="1">Homodimer. Part of the 2-oxoglutarate dehydrogenase (OGDH) complex composed of E1 (2-oxoglutarate dehydrogenase), E2 (dihydrolipoamide succinyltransferase) and E3 (dihydrolipoamide dehydrogenase); the complex contains multiple copies of the three enzymatic components (E1, E2 and E3).</text>
</comment>
<comment type="similarity">
    <text evidence="1">Belongs to the alpha-ketoglutarate dehydrogenase family.</text>
</comment>
<keyword id="KW-0324">Glycolysis</keyword>
<keyword id="KW-0560">Oxidoreductase</keyword>
<keyword id="KW-0786">Thiamine pyrophosphate</keyword>
<protein>
    <recommendedName>
        <fullName evidence="1">2-oxoglutarate dehydrogenase E1 component</fullName>
        <ecNumber evidence="1">1.2.4.2</ecNumber>
    </recommendedName>
    <alternativeName>
        <fullName evidence="1">Alpha-ketoglutarate dehydrogenase</fullName>
    </alternativeName>
</protein>
<organism>
    <name type="scientific">Staphylococcus aureus (strain USA300 / TCH1516)</name>
    <dbReference type="NCBI Taxonomy" id="451516"/>
    <lineage>
        <taxon>Bacteria</taxon>
        <taxon>Bacillati</taxon>
        <taxon>Bacillota</taxon>
        <taxon>Bacilli</taxon>
        <taxon>Bacillales</taxon>
        <taxon>Staphylococcaceae</taxon>
        <taxon>Staphylococcus</taxon>
    </lineage>
</organism>
<sequence>MTNERKEVSEAPVNFGANLGLMLDLYDDFLQDPSSVPEDLQVLFSTIKNDDSIVPALKSTSSQNSDGTIKRVMRLIDNIRQYGHLKADIYPVNPPKRKHVPKLEIEDFDLDQQTLEGISAGIVSDHFADIYDNAYEAILRMEKRYKGPIAFEYTHINNNTERGWLKRRIETPYKVTLNNNEKRALFKQLAYVEGFEKYLHKNFVGAKRFSIEGVDALVPMLQRTITIAAKEGIKNIQIGMAHRGRLNVLTHVLEKPYEMMISEFMHTDPMKFLPEDGSLQLTAGWTGDVKYHLGGIKTTDSYGTMQRIALANNPSHLEIVAPVVEGRTRAAQDDTQRAGAPTTDHHKAMPIIIHGDAAYPGQGINFETMNLGNLKGYSTGGSLHIITNNRIGFTTEPIDARSTTYSTDVAKGYDVPIFHVNADDVEATIEAIDIAMEFRKEFHKDVVIDLVGYRRFGHNEMDEPSITNPVPYQNIRKHDSVEYVFGKKLVNEGVISEDEMHSFIEQVQKELRQAHDKINKADKMDNPDMEKPADLALPLQADEQSFTFDHLKEINDALLTYPDGFNILKKLNKVLEKRHEPFNKEDGLVDWAQAEQLAFATILQDGTPIRLTGQDSERGTFSHRHAVLHDEQTGETYTPLHHVPDQKATFDIHNSPLSEAAVVGFEYGYNVENKKSFNIWEAQYGDFANMSQMIFDNFLFSSRSKWGERSGLTLFLPHAYEGQGPEHSSARLERFLQLAAENNCTVVNLSSSSNYFHLLRAQAASLDSEQMRPLVVMSPKSLLRNKTVAKPIDEFTSGGFEPILTESYQADKVTKVILATGKMFIDLKEALAKNPDESVLLVAIERLYPFPEEEIEALLAQLPNLEEVSWVQEEPKNQGAWLYVYPYVKVLVADKYDLSYHGRIQRAAPAEGDGEIHKLVQNKIIENALKNN</sequence>
<accession>A8Z3Z0</accession>
<proteinExistence type="inferred from homology"/>
<reference key="1">
    <citation type="journal article" date="2007" name="BMC Microbiol.">
        <title>Subtle genetic changes enhance virulence of methicillin resistant and sensitive Staphylococcus aureus.</title>
        <authorList>
            <person name="Highlander S.K."/>
            <person name="Hulten K.G."/>
            <person name="Qin X."/>
            <person name="Jiang H."/>
            <person name="Yerrapragada S."/>
            <person name="Mason E.O. Jr."/>
            <person name="Shang Y."/>
            <person name="Williams T.M."/>
            <person name="Fortunov R.M."/>
            <person name="Liu Y."/>
            <person name="Igboeli O."/>
            <person name="Petrosino J."/>
            <person name="Tirumalai M."/>
            <person name="Uzman A."/>
            <person name="Fox G.E."/>
            <person name="Cardenas A.M."/>
            <person name="Muzny D.M."/>
            <person name="Hemphill L."/>
            <person name="Ding Y."/>
            <person name="Dugan S."/>
            <person name="Blyth P.R."/>
            <person name="Buhay C.J."/>
            <person name="Dinh H.H."/>
            <person name="Hawes A.C."/>
            <person name="Holder M."/>
            <person name="Kovar C.L."/>
            <person name="Lee S.L."/>
            <person name="Liu W."/>
            <person name="Nazareth L.V."/>
            <person name="Wang Q."/>
            <person name="Zhou J."/>
            <person name="Kaplan S.L."/>
            <person name="Weinstock G.M."/>
        </authorList>
    </citation>
    <scope>NUCLEOTIDE SEQUENCE [LARGE SCALE GENOMIC DNA]</scope>
    <source>
        <strain>USA300 / TCH1516</strain>
    </source>
</reference>
<evidence type="ECO:0000255" key="1">
    <source>
        <dbReference type="HAMAP-Rule" id="MF_01169"/>
    </source>
</evidence>
<feature type="chain" id="PRO_1000085389" description="2-oxoglutarate dehydrogenase E1 component">
    <location>
        <begin position="1"/>
        <end position="932"/>
    </location>
</feature>
<gene>
    <name evidence="1" type="primary">odhA</name>
    <name type="ordered locus">USA300HOU_1348</name>
</gene>
<name>ODO1_STAAT</name>
<dbReference type="EC" id="1.2.4.2" evidence="1"/>
<dbReference type="EMBL" id="CP000730">
    <property type="protein sequence ID" value="ABX29358.1"/>
    <property type="molecule type" value="Genomic_DNA"/>
</dbReference>
<dbReference type="RefSeq" id="WP_000180666.1">
    <property type="nucleotide sequence ID" value="NC_010079.1"/>
</dbReference>
<dbReference type="SMR" id="A8Z3Z0"/>
<dbReference type="KEGG" id="sax:USA300HOU_1348"/>
<dbReference type="HOGENOM" id="CLU_004709_1_0_9"/>
<dbReference type="GO" id="GO:0005829">
    <property type="term" value="C:cytosol"/>
    <property type="evidence" value="ECO:0007669"/>
    <property type="project" value="TreeGrafter"/>
</dbReference>
<dbReference type="GO" id="GO:0045252">
    <property type="term" value="C:oxoglutarate dehydrogenase complex"/>
    <property type="evidence" value="ECO:0007669"/>
    <property type="project" value="TreeGrafter"/>
</dbReference>
<dbReference type="GO" id="GO:0004591">
    <property type="term" value="F:oxoglutarate dehydrogenase (succinyl-transferring) activity"/>
    <property type="evidence" value="ECO:0007669"/>
    <property type="project" value="UniProtKB-UniRule"/>
</dbReference>
<dbReference type="GO" id="GO:0030976">
    <property type="term" value="F:thiamine pyrophosphate binding"/>
    <property type="evidence" value="ECO:0007669"/>
    <property type="project" value="UniProtKB-UniRule"/>
</dbReference>
<dbReference type="GO" id="GO:0006096">
    <property type="term" value="P:glycolytic process"/>
    <property type="evidence" value="ECO:0007669"/>
    <property type="project" value="UniProtKB-UniRule"/>
</dbReference>
<dbReference type="GO" id="GO:0006099">
    <property type="term" value="P:tricarboxylic acid cycle"/>
    <property type="evidence" value="ECO:0007669"/>
    <property type="project" value="TreeGrafter"/>
</dbReference>
<dbReference type="CDD" id="cd02016">
    <property type="entry name" value="TPP_E1_OGDC_like"/>
    <property type="match status" value="1"/>
</dbReference>
<dbReference type="FunFam" id="3.40.50.11610:FF:000002">
    <property type="entry name" value="2-oxoglutarate dehydrogenase E1 component"/>
    <property type="match status" value="1"/>
</dbReference>
<dbReference type="FunFam" id="3.40.50.970:FF:000036">
    <property type="entry name" value="2-oxoglutarate dehydrogenase E1 component"/>
    <property type="match status" value="1"/>
</dbReference>
<dbReference type="Gene3D" id="3.40.50.12470">
    <property type="match status" value="1"/>
</dbReference>
<dbReference type="Gene3D" id="3.40.50.970">
    <property type="match status" value="1"/>
</dbReference>
<dbReference type="Gene3D" id="3.40.50.11610">
    <property type="entry name" value="Multifunctional 2-oxoglutarate metabolism enzyme, C-terminal domain"/>
    <property type="match status" value="1"/>
</dbReference>
<dbReference type="Gene3D" id="1.10.287.1150">
    <property type="entry name" value="TPP helical domain"/>
    <property type="match status" value="1"/>
</dbReference>
<dbReference type="HAMAP" id="MF_01169">
    <property type="entry name" value="SucA_OdhA"/>
    <property type="match status" value="1"/>
</dbReference>
<dbReference type="InterPro" id="IPR011603">
    <property type="entry name" value="2oxoglutarate_DH_E1"/>
</dbReference>
<dbReference type="InterPro" id="IPR023784">
    <property type="entry name" value="2oxoglutarate_DH_E1_bac"/>
</dbReference>
<dbReference type="InterPro" id="IPR001017">
    <property type="entry name" value="DH_E1"/>
</dbReference>
<dbReference type="InterPro" id="IPR042179">
    <property type="entry name" value="KGD_C_sf"/>
</dbReference>
<dbReference type="InterPro" id="IPR031717">
    <property type="entry name" value="ODO-1/KGD_C"/>
</dbReference>
<dbReference type="InterPro" id="IPR029061">
    <property type="entry name" value="THDP-binding"/>
</dbReference>
<dbReference type="InterPro" id="IPR005475">
    <property type="entry name" value="Transketolase-like_Pyr-bd"/>
</dbReference>
<dbReference type="NCBIfam" id="TIGR00239">
    <property type="entry name" value="2oxo_dh_E1"/>
    <property type="match status" value="1"/>
</dbReference>
<dbReference type="NCBIfam" id="NF006914">
    <property type="entry name" value="PRK09404.1"/>
    <property type="match status" value="1"/>
</dbReference>
<dbReference type="NCBIfam" id="NF008907">
    <property type="entry name" value="PRK12270.1"/>
    <property type="match status" value="1"/>
</dbReference>
<dbReference type="PANTHER" id="PTHR23152:SF4">
    <property type="entry name" value="2-OXOADIPATE DEHYDROGENASE COMPLEX COMPONENT E1"/>
    <property type="match status" value="1"/>
</dbReference>
<dbReference type="PANTHER" id="PTHR23152">
    <property type="entry name" value="2-OXOGLUTARATE DEHYDROGENASE"/>
    <property type="match status" value="1"/>
</dbReference>
<dbReference type="Pfam" id="PF00676">
    <property type="entry name" value="E1_dh"/>
    <property type="match status" value="1"/>
</dbReference>
<dbReference type="Pfam" id="PF16870">
    <property type="entry name" value="OxoGdeHyase_C"/>
    <property type="match status" value="1"/>
</dbReference>
<dbReference type="Pfam" id="PF02779">
    <property type="entry name" value="Transket_pyr"/>
    <property type="match status" value="1"/>
</dbReference>
<dbReference type="PIRSF" id="PIRSF000157">
    <property type="entry name" value="Oxoglu_dh_E1"/>
    <property type="match status" value="1"/>
</dbReference>
<dbReference type="SMART" id="SM00861">
    <property type="entry name" value="Transket_pyr"/>
    <property type="match status" value="1"/>
</dbReference>
<dbReference type="SUPFAM" id="SSF52518">
    <property type="entry name" value="Thiamin diphosphate-binding fold (THDP-binding)"/>
    <property type="match status" value="2"/>
</dbReference>